<name>TMCAL_THEPX</name>
<proteinExistence type="inferred from homology"/>
<keyword id="KW-0067">ATP-binding</keyword>
<keyword id="KW-0963">Cytoplasm</keyword>
<keyword id="KW-0436">Ligase</keyword>
<keyword id="KW-0547">Nucleotide-binding</keyword>
<keyword id="KW-0694">RNA-binding</keyword>
<keyword id="KW-0819">tRNA processing</keyword>
<keyword id="KW-0820">tRNA-binding</keyword>
<protein>
    <recommendedName>
        <fullName evidence="1">tRNA(Met) cytidine acetate ligase</fullName>
        <ecNumber evidence="1">6.3.4.-</ecNumber>
    </recommendedName>
</protein>
<reference key="1">
    <citation type="submission" date="2008-01" db="EMBL/GenBank/DDBJ databases">
        <title>Complete sequence of Thermoanaerobacter sp. X514.</title>
        <authorList>
            <consortium name="US DOE Joint Genome Institute"/>
            <person name="Copeland A."/>
            <person name="Lucas S."/>
            <person name="Lapidus A."/>
            <person name="Barry K."/>
            <person name="Glavina del Rio T."/>
            <person name="Dalin E."/>
            <person name="Tice H."/>
            <person name="Pitluck S."/>
            <person name="Bruce D."/>
            <person name="Goodwin L."/>
            <person name="Saunders E."/>
            <person name="Brettin T."/>
            <person name="Detter J.C."/>
            <person name="Han C."/>
            <person name="Schmutz J."/>
            <person name="Larimer F."/>
            <person name="Land M."/>
            <person name="Hauser L."/>
            <person name="Kyrpides N."/>
            <person name="Kim E."/>
            <person name="Hemme C."/>
            <person name="Fields M.W."/>
            <person name="He Z."/>
            <person name="Zhou J."/>
            <person name="Richardson P."/>
        </authorList>
    </citation>
    <scope>NUCLEOTIDE SEQUENCE [LARGE SCALE GENOMIC DNA]</scope>
    <source>
        <strain>X514</strain>
    </source>
</reference>
<feature type="chain" id="PRO_1000146638" description="tRNA(Met) cytidine acetate ligase">
    <location>
        <begin position="1"/>
        <end position="401"/>
    </location>
</feature>
<feature type="binding site" evidence="1">
    <location>
        <begin position="7"/>
        <end position="20"/>
    </location>
    <ligand>
        <name>ATP</name>
        <dbReference type="ChEBI" id="CHEBI:30616"/>
    </ligand>
</feature>
<feature type="binding site" evidence="1">
    <location>
        <position position="102"/>
    </location>
    <ligand>
        <name>ATP</name>
        <dbReference type="ChEBI" id="CHEBI:30616"/>
    </ligand>
</feature>
<feature type="binding site" evidence="1">
    <location>
        <position position="164"/>
    </location>
    <ligand>
        <name>ATP</name>
        <dbReference type="ChEBI" id="CHEBI:30616"/>
    </ligand>
</feature>
<feature type="binding site" evidence="1">
    <location>
        <position position="189"/>
    </location>
    <ligand>
        <name>ATP</name>
        <dbReference type="ChEBI" id="CHEBI:30616"/>
    </ligand>
</feature>
<organism>
    <name type="scientific">Thermoanaerobacter sp. (strain X514)</name>
    <dbReference type="NCBI Taxonomy" id="399726"/>
    <lineage>
        <taxon>Bacteria</taxon>
        <taxon>Bacillati</taxon>
        <taxon>Bacillota</taxon>
        <taxon>Clostridia</taxon>
        <taxon>Thermoanaerobacterales</taxon>
        <taxon>Thermoanaerobacteraceae</taxon>
        <taxon>Thermoanaerobacter</taxon>
    </lineage>
</organism>
<gene>
    <name evidence="1" type="primary">tmcAL</name>
    <name type="ordered locus">Teth514_1733</name>
</gene>
<comment type="function">
    <text evidence="1">Catalyzes the formation of N(4)-acetylcytidine (ac(4)C) at the wobble position of elongator tRNA(Met), using acetate and ATP as substrates. First activates an acetate ion to form acetyladenylate (Ac-AMP) and then transfers the acetyl group to tRNA to form ac(4)C34.</text>
</comment>
<comment type="catalytic activity">
    <reaction evidence="1">
        <text>cytidine(34) in elongator tRNA(Met) + acetate + ATP = N(4)-acetylcytidine(34) in elongator tRNA(Met) + AMP + diphosphate</text>
        <dbReference type="Rhea" id="RHEA:58144"/>
        <dbReference type="Rhea" id="RHEA-COMP:10693"/>
        <dbReference type="Rhea" id="RHEA-COMP:10694"/>
        <dbReference type="ChEBI" id="CHEBI:30089"/>
        <dbReference type="ChEBI" id="CHEBI:30616"/>
        <dbReference type="ChEBI" id="CHEBI:33019"/>
        <dbReference type="ChEBI" id="CHEBI:74900"/>
        <dbReference type="ChEBI" id="CHEBI:82748"/>
        <dbReference type="ChEBI" id="CHEBI:456215"/>
    </reaction>
</comment>
<comment type="subcellular location">
    <subcellularLocation>
        <location evidence="1">Cytoplasm</location>
    </subcellularLocation>
</comment>
<comment type="similarity">
    <text evidence="1">Belongs to the TmcAL family.</text>
</comment>
<evidence type="ECO:0000255" key="1">
    <source>
        <dbReference type="HAMAP-Rule" id="MF_01539"/>
    </source>
</evidence>
<dbReference type="EC" id="6.3.4.-" evidence="1"/>
<dbReference type="EMBL" id="CP000923">
    <property type="protein sequence ID" value="ABY93019.1"/>
    <property type="molecule type" value="Genomic_DNA"/>
</dbReference>
<dbReference type="RefSeq" id="WP_003868232.1">
    <property type="nucleotide sequence ID" value="NC_010320.1"/>
</dbReference>
<dbReference type="SMR" id="B0K1X1"/>
<dbReference type="KEGG" id="tex:Teth514_1733"/>
<dbReference type="HOGENOM" id="CLU_038915_0_1_9"/>
<dbReference type="Proteomes" id="UP000002155">
    <property type="component" value="Chromosome"/>
</dbReference>
<dbReference type="GO" id="GO:0005737">
    <property type="term" value="C:cytoplasm"/>
    <property type="evidence" value="ECO:0007669"/>
    <property type="project" value="UniProtKB-SubCell"/>
</dbReference>
<dbReference type="GO" id="GO:0005524">
    <property type="term" value="F:ATP binding"/>
    <property type="evidence" value="ECO:0007669"/>
    <property type="project" value="UniProtKB-KW"/>
</dbReference>
<dbReference type="GO" id="GO:0016879">
    <property type="term" value="F:ligase activity, forming carbon-nitrogen bonds"/>
    <property type="evidence" value="ECO:0007669"/>
    <property type="project" value="UniProtKB-UniRule"/>
</dbReference>
<dbReference type="GO" id="GO:0000049">
    <property type="term" value="F:tRNA binding"/>
    <property type="evidence" value="ECO:0007669"/>
    <property type="project" value="UniProtKB-KW"/>
</dbReference>
<dbReference type="GO" id="GO:0006400">
    <property type="term" value="P:tRNA modification"/>
    <property type="evidence" value="ECO:0007669"/>
    <property type="project" value="UniProtKB-UniRule"/>
</dbReference>
<dbReference type="Gene3D" id="3.40.50.620">
    <property type="entry name" value="HUPs"/>
    <property type="match status" value="1"/>
</dbReference>
<dbReference type="HAMAP" id="MF_01539">
    <property type="entry name" value="TmcAL"/>
    <property type="match status" value="1"/>
</dbReference>
<dbReference type="InterPro" id="IPR014729">
    <property type="entry name" value="Rossmann-like_a/b/a_fold"/>
</dbReference>
<dbReference type="InterPro" id="IPR008513">
    <property type="entry name" value="tRNA(Met)_cyd_acetate_ligase"/>
</dbReference>
<dbReference type="NCBIfam" id="NF010191">
    <property type="entry name" value="PRK13670.1"/>
    <property type="match status" value="1"/>
</dbReference>
<dbReference type="PANTHER" id="PTHR37825">
    <property type="entry name" value="TRNA(MET) CYTIDINE ACETATE LIGASE"/>
    <property type="match status" value="1"/>
</dbReference>
<dbReference type="PANTHER" id="PTHR37825:SF1">
    <property type="entry name" value="TRNA(MET) CYTIDINE ACETATE LIGASE"/>
    <property type="match status" value="1"/>
</dbReference>
<dbReference type="Pfam" id="PF05636">
    <property type="entry name" value="HIGH_NTase1"/>
    <property type="match status" value="1"/>
</dbReference>
<dbReference type="SUPFAM" id="SSF52374">
    <property type="entry name" value="Nucleotidylyl transferase"/>
    <property type="match status" value="1"/>
</dbReference>
<accession>B0K1X1</accession>
<sequence>MGILGIIVEYNPFHNGHLYHLQTSKELTKCDYTIAVMSGNFVQRGEPAIVDKWKRTQMALKAGIDLVIELPVVYATSTAENFAYGAVKLLDSLKIVDCISFGSEKGDLNELTKIAEILLEEPIYYRKALKEYLKSGITFAKARELALQKVINNNEIEKILQTSNNILAIEYLKSLKKIGSSITPFTIKRKGSLYTSLELKGEFASASSIRKHIFEKGLEGLEKYIPDFTKEILQSSFEKKQGPVSLEEFSNILIYLLRNHIPLNHIFDVSEGLENKIYKASYKTNNVEELMKLVKSKRYTESRIRHILIHLLLNIDKQIFKEFDGPNYIRVLGFNEKGKEMLREIKKKSPLPIITKVSQYKEKLSNTKMFEKDLFATDIYTLAYKNSSIAGLDFIHPLIKL</sequence>